<accession>Q9M2Z4</accession>
<accession>Q9XFM5</accession>
<organism>
    <name type="scientific">Arabidopsis thaliana</name>
    <name type="common">Mouse-ear cress</name>
    <dbReference type="NCBI Taxonomy" id="3702"/>
    <lineage>
        <taxon>Eukaryota</taxon>
        <taxon>Viridiplantae</taxon>
        <taxon>Streptophyta</taxon>
        <taxon>Embryophyta</taxon>
        <taxon>Tracheophyta</taxon>
        <taxon>Spermatophyta</taxon>
        <taxon>Magnoliopsida</taxon>
        <taxon>eudicotyledons</taxon>
        <taxon>Gunneridae</taxon>
        <taxon>Pentapetalae</taxon>
        <taxon>rosids</taxon>
        <taxon>malvids</taxon>
        <taxon>Brassicales</taxon>
        <taxon>Brassicaceae</taxon>
        <taxon>Camelineae</taxon>
        <taxon>Arabidopsis</taxon>
    </lineage>
</organism>
<comment type="subcellular location">
    <subcellularLocation>
        <location evidence="1">Cell membrane</location>
    </subcellularLocation>
</comment>
<comment type="domain">
    <text evidence="5">The cytochrome b5 heme-binding domain lacks the conserved iron-binding His residues at positions 105 and 129.</text>
</comment>
<comment type="similarity">
    <text evidence="5">Belongs to the cytochrome b5 family. MAPR subfamily.</text>
</comment>
<comment type="sequence caution" evidence="5">
    <conflict type="frameshift">
        <sequence resource="EMBL-CDS" id="AAD34615"/>
    </conflict>
</comment>
<protein>
    <recommendedName>
        <fullName>Membrane steroid-binding protein 2</fullName>
        <shortName>AtMP2</shortName>
    </recommendedName>
    <alternativeName>
        <fullName evidence="4">Membrane-associated progesterone-binding protein 3</fullName>
        <shortName evidence="4">AtMAPR3</shortName>
    </alternativeName>
</protein>
<feature type="chain" id="PRO_0000121749" description="Membrane steroid-binding protein 2">
    <location>
        <begin position="1"/>
        <end position="233"/>
    </location>
</feature>
<feature type="transmembrane region" description="Helical" evidence="2">
    <location>
        <begin position="23"/>
        <end position="43"/>
    </location>
</feature>
<feature type="domain" description="Cytochrome b5 heme-binding">
    <location>
        <begin position="70"/>
        <end position="167"/>
    </location>
</feature>
<feature type="region of interest" description="Steroid-binding" evidence="1">
    <location>
        <begin position="70"/>
        <end position="167"/>
    </location>
</feature>
<feature type="region of interest" description="Disordered" evidence="3">
    <location>
        <begin position="169"/>
        <end position="233"/>
    </location>
</feature>
<feature type="compositionally biased region" description="Basic and acidic residues" evidence="3">
    <location>
        <begin position="169"/>
        <end position="181"/>
    </location>
</feature>
<feature type="compositionally biased region" description="Basic and acidic residues" evidence="3">
    <location>
        <begin position="202"/>
        <end position="224"/>
    </location>
</feature>
<feature type="modified residue" description="Phosphothreonine" evidence="7">
    <location>
        <position position="225"/>
    </location>
</feature>
<reference key="1">
    <citation type="submission" date="1999-05" db="EMBL/GenBank/DDBJ databases">
        <title>Plant homologues of mammalian putative progesterone-binding membrane proteins.</title>
        <authorList>
            <person name="Choi J.H."/>
            <person name="Choi H."/>
            <person name="Gray P."/>
        </authorList>
    </citation>
    <scope>NUCLEOTIDE SEQUENCE [MRNA]</scope>
    <source>
        <strain>cv. Columbia</strain>
    </source>
</reference>
<reference key="2">
    <citation type="journal article" date="2000" name="Nature">
        <title>Sequence and analysis of chromosome 3 of the plant Arabidopsis thaliana.</title>
        <authorList>
            <person name="Salanoubat M."/>
            <person name="Lemcke K."/>
            <person name="Rieger M."/>
            <person name="Ansorge W."/>
            <person name="Unseld M."/>
            <person name="Fartmann B."/>
            <person name="Valle G."/>
            <person name="Bloecker H."/>
            <person name="Perez-Alonso M."/>
            <person name="Obermaier B."/>
            <person name="Delseny M."/>
            <person name="Boutry M."/>
            <person name="Grivell L.A."/>
            <person name="Mache R."/>
            <person name="Puigdomenech P."/>
            <person name="De Simone V."/>
            <person name="Choisne N."/>
            <person name="Artiguenave F."/>
            <person name="Robert C."/>
            <person name="Brottier P."/>
            <person name="Wincker P."/>
            <person name="Cattolico L."/>
            <person name="Weissenbach J."/>
            <person name="Saurin W."/>
            <person name="Quetier F."/>
            <person name="Schaefer M."/>
            <person name="Mueller-Auer S."/>
            <person name="Gabel C."/>
            <person name="Fuchs M."/>
            <person name="Benes V."/>
            <person name="Wurmbach E."/>
            <person name="Drzonek H."/>
            <person name="Erfle H."/>
            <person name="Jordan N."/>
            <person name="Bangert S."/>
            <person name="Wiedelmann R."/>
            <person name="Kranz H."/>
            <person name="Voss H."/>
            <person name="Holland R."/>
            <person name="Brandt P."/>
            <person name="Nyakatura G."/>
            <person name="Vezzi A."/>
            <person name="D'Angelo M."/>
            <person name="Pallavicini A."/>
            <person name="Toppo S."/>
            <person name="Simionati B."/>
            <person name="Conrad A."/>
            <person name="Hornischer K."/>
            <person name="Kauer G."/>
            <person name="Loehnert T.-H."/>
            <person name="Nordsiek G."/>
            <person name="Reichelt J."/>
            <person name="Scharfe M."/>
            <person name="Schoen O."/>
            <person name="Bargues M."/>
            <person name="Terol J."/>
            <person name="Climent J."/>
            <person name="Navarro P."/>
            <person name="Collado C."/>
            <person name="Perez-Perez A."/>
            <person name="Ottenwaelder B."/>
            <person name="Duchemin D."/>
            <person name="Cooke R."/>
            <person name="Laudie M."/>
            <person name="Berger-Llauro C."/>
            <person name="Purnelle B."/>
            <person name="Masuy D."/>
            <person name="de Haan M."/>
            <person name="Maarse A.C."/>
            <person name="Alcaraz J.-P."/>
            <person name="Cottet A."/>
            <person name="Casacuberta E."/>
            <person name="Monfort A."/>
            <person name="Argiriou A."/>
            <person name="Flores M."/>
            <person name="Liguori R."/>
            <person name="Vitale D."/>
            <person name="Mannhaupt G."/>
            <person name="Haase D."/>
            <person name="Schoof H."/>
            <person name="Rudd S."/>
            <person name="Zaccaria P."/>
            <person name="Mewes H.-W."/>
            <person name="Mayer K.F.X."/>
            <person name="Kaul S."/>
            <person name="Town C.D."/>
            <person name="Koo H.L."/>
            <person name="Tallon L.J."/>
            <person name="Jenkins J."/>
            <person name="Rooney T."/>
            <person name="Rizzo M."/>
            <person name="Walts A."/>
            <person name="Utterback T."/>
            <person name="Fujii C.Y."/>
            <person name="Shea T.P."/>
            <person name="Creasy T.H."/>
            <person name="Haas B."/>
            <person name="Maiti R."/>
            <person name="Wu D."/>
            <person name="Peterson J."/>
            <person name="Van Aken S."/>
            <person name="Pai G."/>
            <person name="Militscher J."/>
            <person name="Sellers P."/>
            <person name="Gill J.E."/>
            <person name="Feldblyum T.V."/>
            <person name="Preuss D."/>
            <person name="Lin X."/>
            <person name="Nierman W.C."/>
            <person name="Salzberg S.L."/>
            <person name="White O."/>
            <person name="Venter J.C."/>
            <person name="Fraser C.M."/>
            <person name="Kaneko T."/>
            <person name="Nakamura Y."/>
            <person name="Sato S."/>
            <person name="Kato T."/>
            <person name="Asamizu E."/>
            <person name="Sasamoto S."/>
            <person name="Kimura T."/>
            <person name="Idesawa K."/>
            <person name="Kawashima K."/>
            <person name="Kishida Y."/>
            <person name="Kiyokawa C."/>
            <person name="Kohara M."/>
            <person name="Matsumoto M."/>
            <person name="Matsuno A."/>
            <person name="Muraki A."/>
            <person name="Nakayama S."/>
            <person name="Nakazaki N."/>
            <person name="Shinpo S."/>
            <person name="Takeuchi C."/>
            <person name="Wada T."/>
            <person name="Watanabe A."/>
            <person name="Yamada M."/>
            <person name="Yasuda M."/>
            <person name="Tabata S."/>
        </authorList>
    </citation>
    <scope>NUCLEOTIDE SEQUENCE [LARGE SCALE GENOMIC DNA]</scope>
    <source>
        <strain>cv. Columbia</strain>
    </source>
</reference>
<reference key="3">
    <citation type="journal article" date="2017" name="Plant J.">
        <title>Araport11: a complete reannotation of the Arabidopsis thaliana reference genome.</title>
        <authorList>
            <person name="Cheng C.Y."/>
            <person name="Krishnakumar V."/>
            <person name="Chan A.P."/>
            <person name="Thibaud-Nissen F."/>
            <person name="Schobel S."/>
            <person name="Town C.D."/>
        </authorList>
    </citation>
    <scope>GENOME REANNOTATION</scope>
    <source>
        <strain>cv. Columbia</strain>
    </source>
</reference>
<reference key="4">
    <citation type="journal article" date="2003" name="Science">
        <title>Empirical analysis of transcriptional activity in the Arabidopsis genome.</title>
        <authorList>
            <person name="Yamada K."/>
            <person name="Lim J."/>
            <person name="Dale J.M."/>
            <person name="Chen H."/>
            <person name="Shinn P."/>
            <person name="Palm C.J."/>
            <person name="Southwick A.M."/>
            <person name="Wu H.C."/>
            <person name="Kim C.J."/>
            <person name="Nguyen M."/>
            <person name="Pham P.K."/>
            <person name="Cheuk R.F."/>
            <person name="Karlin-Newmann G."/>
            <person name="Liu S.X."/>
            <person name="Lam B."/>
            <person name="Sakano H."/>
            <person name="Wu T."/>
            <person name="Yu G."/>
            <person name="Miranda M."/>
            <person name="Quach H.L."/>
            <person name="Tripp M."/>
            <person name="Chang C.H."/>
            <person name="Lee J.M."/>
            <person name="Toriumi M.J."/>
            <person name="Chan M.M."/>
            <person name="Tang C.C."/>
            <person name="Onodera C.S."/>
            <person name="Deng J.M."/>
            <person name="Akiyama K."/>
            <person name="Ansari Y."/>
            <person name="Arakawa T."/>
            <person name="Banh J."/>
            <person name="Banno F."/>
            <person name="Bowser L."/>
            <person name="Brooks S.Y."/>
            <person name="Carninci P."/>
            <person name="Chao Q."/>
            <person name="Choy N."/>
            <person name="Enju A."/>
            <person name="Goldsmith A.D."/>
            <person name="Gurjal M."/>
            <person name="Hansen N.F."/>
            <person name="Hayashizaki Y."/>
            <person name="Johnson-Hopson C."/>
            <person name="Hsuan V.W."/>
            <person name="Iida K."/>
            <person name="Karnes M."/>
            <person name="Khan S."/>
            <person name="Koesema E."/>
            <person name="Ishida J."/>
            <person name="Jiang P.X."/>
            <person name="Jones T."/>
            <person name="Kawai J."/>
            <person name="Kamiya A."/>
            <person name="Meyers C."/>
            <person name="Nakajima M."/>
            <person name="Narusaka M."/>
            <person name="Seki M."/>
            <person name="Sakurai T."/>
            <person name="Satou M."/>
            <person name="Tamse R."/>
            <person name="Vaysberg M."/>
            <person name="Wallender E.K."/>
            <person name="Wong C."/>
            <person name="Yamamura Y."/>
            <person name="Yuan S."/>
            <person name="Shinozaki K."/>
            <person name="Davis R.W."/>
            <person name="Theologis A."/>
            <person name="Ecker J.R."/>
        </authorList>
    </citation>
    <scope>NUCLEOTIDE SEQUENCE [LARGE SCALE MRNA]</scope>
    <source>
        <strain>cv. Columbia</strain>
    </source>
</reference>
<reference key="5">
    <citation type="journal article" date="2005" name="Bot. Bull. Acad. Sin.">
        <title>Characterization of a novel Arabidopsis protein family AtMAPR homologous to 25-Dx/IZAg/Hpr6.6 proteins.</title>
        <authorList>
            <person name="Kao A.L."/>
            <person name="Chang T.Y."/>
            <person name="Chang S.H."/>
            <person name="Su J.C."/>
            <person name="Yang C.C."/>
        </authorList>
    </citation>
    <scope>NOMENCLATURE</scope>
</reference>
<reference key="6">
    <citation type="journal article" date="2008" name="J. Proteome Res.">
        <title>Site-specific phosphorylation profiling of Arabidopsis proteins by mass spectrometry and peptide chip analysis.</title>
        <authorList>
            <person name="de la Fuente van Bentem S."/>
            <person name="Anrather D."/>
            <person name="Dohnal I."/>
            <person name="Roitinger E."/>
            <person name="Csaszar E."/>
            <person name="Joore J."/>
            <person name="Buijnink J."/>
            <person name="Carreri A."/>
            <person name="Forzani C."/>
            <person name="Lorkovic Z.J."/>
            <person name="Barta A."/>
            <person name="Lecourieux D."/>
            <person name="Verhounig A."/>
            <person name="Jonak C."/>
            <person name="Hirt H."/>
        </authorList>
    </citation>
    <scope>IDENTIFICATION BY MASS SPECTROMETRY [LARGE SCALE ANALYSIS]</scope>
    <source>
        <tissue>Root</tissue>
    </source>
</reference>
<reference key="7">
    <citation type="journal article" date="2009" name="Plant Physiol.">
        <title>Large-scale Arabidopsis phosphoproteome profiling reveals novel chloroplast kinase substrates and phosphorylation networks.</title>
        <authorList>
            <person name="Reiland S."/>
            <person name="Messerli G."/>
            <person name="Baerenfaller K."/>
            <person name="Gerrits B."/>
            <person name="Endler A."/>
            <person name="Grossmann J."/>
            <person name="Gruissem W."/>
            <person name="Baginsky S."/>
        </authorList>
    </citation>
    <scope>PHOSPHORYLATION [LARGE SCALE ANALYSIS] AT THR-225</scope>
    <scope>IDENTIFICATION BY MASS SPECTROMETRY [LARGE SCALE ANALYSIS]</scope>
</reference>
<keyword id="KW-1003">Cell membrane</keyword>
<keyword id="KW-0446">Lipid-binding</keyword>
<keyword id="KW-0472">Membrane</keyword>
<keyword id="KW-0597">Phosphoprotein</keyword>
<keyword id="KW-1185">Reference proteome</keyword>
<keyword id="KW-0754">Steroid-binding</keyword>
<keyword id="KW-0812">Transmembrane</keyword>
<keyword id="KW-1133">Transmembrane helix</keyword>
<gene>
    <name type="primary">MSBP2</name>
    <name type="synonym">MAPR3</name>
    <name type="synonym">MP2</name>
    <name type="ordered locus">At3g48890</name>
    <name evidence="6" type="ORF">T21J18.160</name>
</gene>
<dbReference type="EMBL" id="AF153283">
    <property type="protein sequence ID" value="AAD34615.1"/>
    <property type="status" value="ALT_FRAME"/>
    <property type="molecule type" value="mRNA"/>
</dbReference>
<dbReference type="EMBL" id="AL132963">
    <property type="protein sequence ID" value="CAB87917.1"/>
    <property type="molecule type" value="Genomic_DNA"/>
</dbReference>
<dbReference type="EMBL" id="CP002686">
    <property type="protein sequence ID" value="AEE78470.1"/>
    <property type="molecule type" value="Genomic_DNA"/>
</dbReference>
<dbReference type="EMBL" id="AY079104">
    <property type="protein sequence ID" value="AAL84988.1"/>
    <property type="molecule type" value="mRNA"/>
</dbReference>
<dbReference type="EMBL" id="AF419567">
    <property type="protein sequence ID" value="AAL31899.1"/>
    <property type="molecule type" value="mRNA"/>
</dbReference>
<dbReference type="PIR" id="T49285">
    <property type="entry name" value="T49285"/>
</dbReference>
<dbReference type="RefSeq" id="NP_190458.1">
    <property type="nucleotide sequence ID" value="NM_114748.3"/>
</dbReference>
<dbReference type="SMR" id="Q9M2Z4"/>
<dbReference type="BioGRID" id="9368">
    <property type="interactions" value="98"/>
</dbReference>
<dbReference type="FunCoup" id="Q9M2Z4">
    <property type="interactions" value="3452"/>
</dbReference>
<dbReference type="IntAct" id="Q9M2Z4">
    <property type="interactions" value="96"/>
</dbReference>
<dbReference type="STRING" id="3702.Q9M2Z4"/>
<dbReference type="iPTMnet" id="Q9M2Z4"/>
<dbReference type="PaxDb" id="3702-AT3G48890.1"/>
<dbReference type="ProteomicsDB" id="239000"/>
<dbReference type="EnsemblPlants" id="AT3G48890.1">
    <property type="protein sequence ID" value="AT3G48890.1"/>
    <property type="gene ID" value="AT3G48890"/>
</dbReference>
<dbReference type="GeneID" id="824050"/>
<dbReference type="Gramene" id="AT3G48890.1">
    <property type="protein sequence ID" value="AT3G48890.1"/>
    <property type="gene ID" value="AT3G48890"/>
</dbReference>
<dbReference type="KEGG" id="ath:AT3G48890"/>
<dbReference type="Araport" id="AT3G48890"/>
<dbReference type="TAIR" id="AT3G48890">
    <property type="gene designation" value="MAPR3"/>
</dbReference>
<dbReference type="eggNOG" id="KOG1110">
    <property type="taxonomic scope" value="Eukaryota"/>
</dbReference>
<dbReference type="HOGENOM" id="CLU_042860_0_2_1"/>
<dbReference type="InParanoid" id="Q9M2Z4"/>
<dbReference type="OMA" id="FFAHYSS"/>
<dbReference type="OrthoDB" id="547796at2759"/>
<dbReference type="PhylomeDB" id="Q9M2Z4"/>
<dbReference type="CD-CODE" id="4299E36E">
    <property type="entry name" value="Nucleolus"/>
</dbReference>
<dbReference type="PRO" id="PR:Q9M2Z4"/>
<dbReference type="Proteomes" id="UP000006548">
    <property type="component" value="Chromosome 3"/>
</dbReference>
<dbReference type="ExpressionAtlas" id="Q9M2Z4">
    <property type="expression patterns" value="baseline and differential"/>
</dbReference>
<dbReference type="GO" id="GO:0009535">
    <property type="term" value="C:chloroplast thylakoid membrane"/>
    <property type="evidence" value="ECO:0007005"/>
    <property type="project" value="TAIR"/>
</dbReference>
<dbReference type="GO" id="GO:0005829">
    <property type="term" value="C:cytosol"/>
    <property type="evidence" value="ECO:0007005"/>
    <property type="project" value="TAIR"/>
</dbReference>
<dbReference type="GO" id="GO:0005783">
    <property type="term" value="C:endoplasmic reticulum"/>
    <property type="evidence" value="ECO:0007005"/>
    <property type="project" value="TAIR"/>
</dbReference>
<dbReference type="GO" id="GO:0005886">
    <property type="term" value="C:plasma membrane"/>
    <property type="evidence" value="ECO:0007669"/>
    <property type="project" value="UniProtKB-SubCell"/>
</dbReference>
<dbReference type="GO" id="GO:0019904">
    <property type="term" value="F:protein domain specific binding"/>
    <property type="evidence" value="ECO:0000353"/>
    <property type="project" value="CAFA"/>
</dbReference>
<dbReference type="GO" id="GO:0005496">
    <property type="term" value="F:steroid binding"/>
    <property type="evidence" value="ECO:0007669"/>
    <property type="project" value="UniProtKB-KW"/>
</dbReference>
<dbReference type="FunFam" id="3.10.120.10:FF:000006">
    <property type="entry name" value="Membrane steroid-binding protein 1"/>
    <property type="match status" value="1"/>
</dbReference>
<dbReference type="Gene3D" id="3.10.120.10">
    <property type="entry name" value="Cytochrome b5-like heme/steroid binding domain"/>
    <property type="match status" value="1"/>
</dbReference>
<dbReference type="InterPro" id="IPR001199">
    <property type="entry name" value="Cyt_B5-like_heme/steroid-bd"/>
</dbReference>
<dbReference type="InterPro" id="IPR036400">
    <property type="entry name" value="Cyt_B5-like_heme/steroid_sf"/>
</dbReference>
<dbReference type="InterPro" id="IPR050577">
    <property type="entry name" value="MAPR/NEUFC/NENF-like"/>
</dbReference>
<dbReference type="PANTHER" id="PTHR10281:SF45">
    <property type="entry name" value="MEMBRANE STEROID-BINDING PROTEIN 2"/>
    <property type="match status" value="1"/>
</dbReference>
<dbReference type="PANTHER" id="PTHR10281">
    <property type="entry name" value="MEMBRANE-ASSOCIATED PROGESTERONE RECEPTOR COMPONENT-RELATED"/>
    <property type="match status" value="1"/>
</dbReference>
<dbReference type="Pfam" id="PF00173">
    <property type="entry name" value="Cyt-b5"/>
    <property type="match status" value="1"/>
</dbReference>
<dbReference type="SMART" id="SM01117">
    <property type="entry name" value="Cyt-b5"/>
    <property type="match status" value="1"/>
</dbReference>
<dbReference type="SUPFAM" id="SSF55856">
    <property type="entry name" value="Cytochrome b5-like heme/steroid binding domain"/>
    <property type="match status" value="1"/>
</dbReference>
<evidence type="ECO:0000250" key="1"/>
<evidence type="ECO:0000255" key="2"/>
<evidence type="ECO:0000256" key="3">
    <source>
        <dbReference type="SAM" id="MobiDB-lite"/>
    </source>
</evidence>
<evidence type="ECO:0000303" key="4">
    <source ref="5"/>
</evidence>
<evidence type="ECO:0000305" key="5"/>
<evidence type="ECO:0000312" key="6">
    <source>
        <dbReference type="EMBL" id="CAB87917.1"/>
    </source>
</evidence>
<evidence type="ECO:0007744" key="7">
    <source>
    </source>
</evidence>
<proteinExistence type="evidence at protein level"/>
<name>MSBP2_ARATH</name>
<sequence length="233" mass="25382">MVQQIWETLKETITAYTGLSPAAFFTVLALAFAVYQVVSGFFVSPEVHRPRSLEVQPQSEPLPPPVQLGEITEEELKLYDGSDSKKPLLMAIKGQIYDVSQSRMFYGPGGPYALFAGKDASRALAKMSFEDQDLTGDISGLGAFELEALQDWEYKFMSKYVKVGTIQKKDGEGKESSEPSEAKTASAEGLSTNTGEEASAITHDETSRSTGEKIAETTEKKDVATDDDDAAKE</sequence>